<sequence length="281" mass="30259">MTDRYAVFGHPVAHSKSPQIHATFGRQEGIAVDYRAIDLAPDAFLAGLEAFAADGGVGANVTSPHKEAAFSVCTTLTARARRAGSVNTLLRKGDRWHGDTTDGIGLVRDLTDRHGLDLRGRRMLLIGAGGSARSVAPAFLDAGITELVVVNRTPERADELIDAMGEPGRAISRYWEDLRELGDFELIVNATSAGRDRDVEFKLPLSLVNSMTTAVDLNYGEAAIAFLAWARAANCRNTVDGLGMLVEQAAESFLQWHGVRPQTDEVYQTLRQGAAVLAGED</sequence>
<evidence type="ECO:0000255" key="1">
    <source>
        <dbReference type="HAMAP-Rule" id="MF_00222"/>
    </source>
</evidence>
<proteinExistence type="inferred from homology"/>
<accession>B4SMU6</accession>
<name>AROE_STRM5</name>
<protein>
    <recommendedName>
        <fullName evidence="1">Shikimate dehydrogenase (NADP(+))</fullName>
        <shortName evidence="1">SDH</shortName>
        <ecNumber evidence="1">1.1.1.25</ecNumber>
    </recommendedName>
</protein>
<organism>
    <name type="scientific">Stenotrophomonas maltophilia (strain R551-3)</name>
    <dbReference type="NCBI Taxonomy" id="391008"/>
    <lineage>
        <taxon>Bacteria</taxon>
        <taxon>Pseudomonadati</taxon>
        <taxon>Pseudomonadota</taxon>
        <taxon>Gammaproteobacteria</taxon>
        <taxon>Lysobacterales</taxon>
        <taxon>Lysobacteraceae</taxon>
        <taxon>Stenotrophomonas</taxon>
        <taxon>Stenotrophomonas maltophilia group</taxon>
    </lineage>
</organism>
<gene>
    <name evidence="1" type="primary">aroE</name>
    <name type="ordered locus">Smal_3856</name>
</gene>
<keyword id="KW-0028">Amino-acid biosynthesis</keyword>
<keyword id="KW-0057">Aromatic amino acid biosynthesis</keyword>
<keyword id="KW-0521">NADP</keyword>
<keyword id="KW-0560">Oxidoreductase</keyword>
<comment type="function">
    <text evidence="1">Involved in the biosynthesis of the chorismate, which leads to the biosynthesis of aromatic amino acids. Catalyzes the reversible NADPH linked reduction of 3-dehydroshikimate (DHSA) to yield shikimate (SA).</text>
</comment>
<comment type="catalytic activity">
    <reaction evidence="1">
        <text>shikimate + NADP(+) = 3-dehydroshikimate + NADPH + H(+)</text>
        <dbReference type="Rhea" id="RHEA:17737"/>
        <dbReference type="ChEBI" id="CHEBI:15378"/>
        <dbReference type="ChEBI" id="CHEBI:16630"/>
        <dbReference type="ChEBI" id="CHEBI:36208"/>
        <dbReference type="ChEBI" id="CHEBI:57783"/>
        <dbReference type="ChEBI" id="CHEBI:58349"/>
        <dbReference type="EC" id="1.1.1.25"/>
    </reaction>
</comment>
<comment type="pathway">
    <text evidence="1">Metabolic intermediate biosynthesis; chorismate biosynthesis; chorismate from D-erythrose 4-phosphate and phosphoenolpyruvate: step 4/7.</text>
</comment>
<comment type="subunit">
    <text evidence="1">Homodimer.</text>
</comment>
<comment type="similarity">
    <text evidence="1">Belongs to the shikimate dehydrogenase family.</text>
</comment>
<reference key="1">
    <citation type="submission" date="2008-06" db="EMBL/GenBank/DDBJ databases">
        <title>Complete sequence of Stenotrophomonas maltophilia R551-3.</title>
        <authorList>
            <consortium name="US DOE Joint Genome Institute"/>
            <person name="Lucas S."/>
            <person name="Copeland A."/>
            <person name="Lapidus A."/>
            <person name="Glavina del Rio T."/>
            <person name="Dalin E."/>
            <person name="Tice H."/>
            <person name="Pitluck S."/>
            <person name="Chain P."/>
            <person name="Malfatti S."/>
            <person name="Shin M."/>
            <person name="Vergez L."/>
            <person name="Lang D."/>
            <person name="Schmutz J."/>
            <person name="Larimer F."/>
            <person name="Land M."/>
            <person name="Hauser L."/>
            <person name="Kyrpides N."/>
            <person name="Mikhailova N."/>
            <person name="Taghavi S."/>
            <person name="Monchy S."/>
            <person name="Newman L."/>
            <person name="Vangronsveld J."/>
            <person name="van der Lelie D."/>
            <person name="Richardson P."/>
        </authorList>
    </citation>
    <scope>NUCLEOTIDE SEQUENCE [LARGE SCALE GENOMIC DNA]</scope>
    <source>
        <strain>R551-3</strain>
    </source>
</reference>
<feature type="chain" id="PRO_1000204274" description="Shikimate dehydrogenase (NADP(+))">
    <location>
        <begin position="1"/>
        <end position="281"/>
    </location>
</feature>
<feature type="active site" description="Proton acceptor" evidence="1">
    <location>
        <position position="66"/>
    </location>
</feature>
<feature type="binding site" evidence="1">
    <location>
        <begin position="15"/>
        <end position="17"/>
    </location>
    <ligand>
        <name>shikimate</name>
        <dbReference type="ChEBI" id="CHEBI:36208"/>
    </ligand>
</feature>
<feature type="binding site" evidence="1">
    <location>
        <position position="62"/>
    </location>
    <ligand>
        <name>shikimate</name>
        <dbReference type="ChEBI" id="CHEBI:36208"/>
    </ligand>
</feature>
<feature type="binding site" evidence="1">
    <location>
        <position position="87"/>
    </location>
    <ligand>
        <name>shikimate</name>
        <dbReference type="ChEBI" id="CHEBI:36208"/>
    </ligand>
</feature>
<feature type="binding site" evidence="1">
    <location>
        <position position="102"/>
    </location>
    <ligand>
        <name>shikimate</name>
        <dbReference type="ChEBI" id="CHEBI:36208"/>
    </ligand>
</feature>
<feature type="binding site" evidence="1">
    <location>
        <begin position="127"/>
        <end position="131"/>
    </location>
    <ligand>
        <name>NADP(+)</name>
        <dbReference type="ChEBI" id="CHEBI:58349"/>
    </ligand>
</feature>
<feature type="binding site" evidence="1">
    <location>
        <begin position="151"/>
        <end position="156"/>
    </location>
    <ligand>
        <name>NADP(+)</name>
        <dbReference type="ChEBI" id="CHEBI:58349"/>
    </ligand>
</feature>
<feature type="binding site" evidence="1">
    <location>
        <position position="217"/>
    </location>
    <ligand>
        <name>NADP(+)</name>
        <dbReference type="ChEBI" id="CHEBI:58349"/>
    </ligand>
</feature>
<feature type="binding site" evidence="1">
    <location>
        <position position="219"/>
    </location>
    <ligand>
        <name>shikimate</name>
        <dbReference type="ChEBI" id="CHEBI:36208"/>
    </ligand>
</feature>
<feature type="binding site" evidence="1">
    <location>
        <position position="241"/>
    </location>
    <ligand>
        <name>NADP(+)</name>
        <dbReference type="ChEBI" id="CHEBI:58349"/>
    </ligand>
</feature>
<dbReference type="EC" id="1.1.1.25" evidence="1"/>
<dbReference type="EMBL" id="CP001111">
    <property type="protein sequence ID" value="ACF53555.1"/>
    <property type="molecule type" value="Genomic_DNA"/>
</dbReference>
<dbReference type="RefSeq" id="WP_006400656.1">
    <property type="nucleotide sequence ID" value="NC_011071.1"/>
</dbReference>
<dbReference type="SMR" id="B4SMU6"/>
<dbReference type="STRING" id="391008.Smal_3856"/>
<dbReference type="KEGG" id="smt:Smal_3856"/>
<dbReference type="eggNOG" id="COG0169">
    <property type="taxonomic scope" value="Bacteria"/>
</dbReference>
<dbReference type="HOGENOM" id="CLU_044063_2_1_6"/>
<dbReference type="OrthoDB" id="9776868at2"/>
<dbReference type="UniPathway" id="UPA00053">
    <property type="reaction ID" value="UER00087"/>
</dbReference>
<dbReference type="Proteomes" id="UP000001867">
    <property type="component" value="Chromosome"/>
</dbReference>
<dbReference type="GO" id="GO:0005829">
    <property type="term" value="C:cytosol"/>
    <property type="evidence" value="ECO:0007669"/>
    <property type="project" value="TreeGrafter"/>
</dbReference>
<dbReference type="GO" id="GO:0050661">
    <property type="term" value="F:NADP binding"/>
    <property type="evidence" value="ECO:0007669"/>
    <property type="project" value="InterPro"/>
</dbReference>
<dbReference type="GO" id="GO:0004764">
    <property type="term" value="F:shikimate 3-dehydrogenase (NADP+) activity"/>
    <property type="evidence" value="ECO:0007669"/>
    <property type="project" value="UniProtKB-UniRule"/>
</dbReference>
<dbReference type="GO" id="GO:0008652">
    <property type="term" value="P:amino acid biosynthetic process"/>
    <property type="evidence" value="ECO:0007669"/>
    <property type="project" value="UniProtKB-KW"/>
</dbReference>
<dbReference type="GO" id="GO:0009073">
    <property type="term" value="P:aromatic amino acid family biosynthetic process"/>
    <property type="evidence" value="ECO:0007669"/>
    <property type="project" value="UniProtKB-KW"/>
</dbReference>
<dbReference type="GO" id="GO:0009423">
    <property type="term" value="P:chorismate biosynthetic process"/>
    <property type="evidence" value="ECO:0007669"/>
    <property type="project" value="UniProtKB-UniRule"/>
</dbReference>
<dbReference type="GO" id="GO:0019632">
    <property type="term" value="P:shikimate metabolic process"/>
    <property type="evidence" value="ECO:0007669"/>
    <property type="project" value="InterPro"/>
</dbReference>
<dbReference type="CDD" id="cd01065">
    <property type="entry name" value="NAD_bind_Shikimate_DH"/>
    <property type="match status" value="1"/>
</dbReference>
<dbReference type="Gene3D" id="3.40.50.10860">
    <property type="entry name" value="Leucine Dehydrogenase, chain A, domain 1"/>
    <property type="match status" value="1"/>
</dbReference>
<dbReference type="Gene3D" id="3.40.50.720">
    <property type="entry name" value="NAD(P)-binding Rossmann-like Domain"/>
    <property type="match status" value="1"/>
</dbReference>
<dbReference type="HAMAP" id="MF_00222">
    <property type="entry name" value="Shikimate_DH_AroE"/>
    <property type="match status" value="1"/>
</dbReference>
<dbReference type="InterPro" id="IPR046346">
    <property type="entry name" value="Aminoacid_DH-like_N_sf"/>
</dbReference>
<dbReference type="InterPro" id="IPR036291">
    <property type="entry name" value="NAD(P)-bd_dom_sf"/>
</dbReference>
<dbReference type="InterPro" id="IPR041121">
    <property type="entry name" value="SDH_C"/>
</dbReference>
<dbReference type="InterPro" id="IPR011342">
    <property type="entry name" value="Shikimate_DH"/>
</dbReference>
<dbReference type="InterPro" id="IPR013708">
    <property type="entry name" value="Shikimate_DH-bd_N"/>
</dbReference>
<dbReference type="InterPro" id="IPR022893">
    <property type="entry name" value="Shikimate_DH_fam"/>
</dbReference>
<dbReference type="InterPro" id="IPR006151">
    <property type="entry name" value="Shikm_DH/Glu-tRNA_Rdtase"/>
</dbReference>
<dbReference type="NCBIfam" id="TIGR00507">
    <property type="entry name" value="aroE"/>
    <property type="match status" value="1"/>
</dbReference>
<dbReference type="NCBIfam" id="NF001310">
    <property type="entry name" value="PRK00258.1-2"/>
    <property type="match status" value="1"/>
</dbReference>
<dbReference type="PANTHER" id="PTHR21089:SF1">
    <property type="entry name" value="BIFUNCTIONAL 3-DEHYDROQUINATE DEHYDRATASE_SHIKIMATE DEHYDROGENASE, CHLOROPLASTIC"/>
    <property type="match status" value="1"/>
</dbReference>
<dbReference type="PANTHER" id="PTHR21089">
    <property type="entry name" value="SHIKIMATE DEHYDROGENASE"/>
    <property type="match status" value="1"/>
</dbReference>
<dbReference type="Pfam" id="PF18317">
    <property type="entry name" value="SDH_C"/>
    <property type="match status" value="1"/>
</dbReference>
<dbReference type="Pfam" id="PF01488">
    <property type="entry name" value="Shikimate_DH"/>
    <property type="match status" value="1"/>
</dbReference>
<dbReference type="Pfam" id="PF08501">
    <property type="entry name" value="Shikimate_dh_N"/>
    <property type="match status" value="1"/>
</dbReference>
<dbReference type="SUPFAM" id="SSF53223">
    <property type="entry name" value="Aminoacid dehydrogenase-like, N-terminal domain"/>
    <property type="match status" value="1"/>
</dbReference>
<dbReference type="SUPFAM" id="SSF51735">
    <property type="entry name" value="NAD(P)-binding Rossmann-fold domains"/>
    <property type="match status" value="1"/>
</dbReference>